<comment type="function">
    <text evidence="1">Catalyzes the transfer of a farnesyl moiety from farnesyl diphosphate to a cysteine at the fourth position from the C-terminus of several proteins. The beta subunit is responsible for peptide-binding (By similarity).</text>
</comment>
<comment type="catalytic activity">
    <reaction>
        <text>L-cysteinyl-[protein] + (2E,6E)-farnesyl diphosphate = S-(2E,6E)-farnesyl-L-cysteinyl-[protein] + diphosphate</text>
        <dbReference type="Rhea" id="RHEA:13345"/>
        <dbReference type="Rhea" id="RHEA-COMP:10131"/>
        <dbReference type="Rhea" id="RHEA-COMP:11535"/>
        <dbReference type="ChEBI" id="CHEBI:29950"/>
        <dbReference type="ChEBI" id="CHEBI:33019"/>
        <dbReference type="ChEBI" id="CHEBI:86019"/>
        <dbReference type="ChEBI" id="CHEBI:175763"/>
        <dbReference type="EC" id="2.5.1.58"/>
    </reaction>
</comment>
<comment type="cofactor">
    <cofactor evidence="2">
        <name>Zn(2+)</name>
        <dbReference type="ChEBI" id="CHEBI:29105"/>
    </cofactor>
    <text evidence="2">Binds 1 zinc ion per subunit.</text>
</comment>
<comment type="subunit">
    <text evidence="1">Heterodimer of fntA and fntB (farnesyltransferase). Heterodimer of an alpha and a beta subunit (By similarity).</text>
</comment>
<comment type="similarity">
    <text evidence="4">Belongs to the protein prenyltransferase subunit beta family.</text>
</comment>
<organism>
    <name type="scientific">Dictyostelium discoideum</name>
    <name type="common">Social amoeba</name>
    <dbReference type="NCBI Taxonomy" id="44689"/>
    <lineage>
        <taxon>Eukaryota</taxon>
        <taxon>Amoebozoa</taxon>
        <taxon>Evosea</taxon>
        <taxon>Eumycetozoa</taxon>
        <taxon>Dictyostelia</taxon>
        <taxon>Dictyosteliales</taxon>
        <taxon>Dictyosteliaceae</taxon>
        <taxon>Dictyostelium</taxon>
    </lineage>
</organism>
<keyword id="KW-0479">Metal-binding</keyword>
<keyword id="KW-0637">Prenyltransferase</keyword>
<keyword id="KW-1185">Reference proteome</keyword>
<keyword id="KW-0677">Repeat</keyword>
<keyword id="KW-0808">Transferase</keyword>
<keyword id="KW-0862">Zinc</keyword>
<feature type="chain" id="PRO_0000328342" description="Protein farnesyltransferase subunit beta">
    <location>
        <begin position="1"/>
        <end position="500"/>
    </location>
</feature>
<feature type="repeat" description="PFTB 1">
    <location>
        <begin position="121"/>
        <end position="162"/>
    </location>
</feature>
<feature type="repeat" description="PFTB 2">
    <location>
        <begin position="172"/>
        <end position="213"/>
    </location>
</feature>
<feature type="repeat" description="PFTB 3">
    <location>
        <begin position="220"/>
        <end position="261"/>
    </location>
</feature>
<feature type="repeat" description="PFTB 4">
    <location>
        <begin position="268"/>
        <end position="309"/>
    </location>
</feature>
<feature type="repeat" description="PFTB 5">
    <location>
        <begin position="343"/>
        <end position="384"/>
    </location>
</feature>
<feature type="region of interest" description="Disordered" evidence="3">
    <location>
        <begin position="117"/>
        <end position="140"/>
    </location>
</feature>
<feature type="region of interest" description="Disordered" evidence="3">
    <location>
        <begin position="402"/>
        <end position="451"/>
    </location>
</feature>
<feature type="compositionally biased region" description="Low complexity" evidence="3">
    <location>
        <begin position="119"/>
        <end position="133"/>
    </location>
</feature>
<feature type="compositionally biased region" description="Low complexity" evidence="3">
    <location>
        <begin position="420"/>
        <end position="449"/>
    </location>
</feature>
<feature type="binding site" evidence="2">
    <location>
        <begin position="246"/>
        <end position="249"/>
    </location>
    <ligand>
        <name>(2E,6E)-farnesyl diphosphate</name>
        <dbReference type="ChEBI" id="CHEBI:175763"/>
    </ligand>
</feature>
<feature type="binding site" evidence="2">
    <location>
        <begin position="288"/>
        <end position="291"/>
    </location>
    <ligand>
        <name>(2E,6E)-farnesyl diphosphate</name>
        <dbReference type="ChEBI" id="CHEBI:175763"/>
    </ligand>
</feature>
<feature type="binding site" evidence="2">
    <location>
        <position position="294"/>
    </location>
    <ligand>
        <name>Zn(2+)</name>
        <dbReference type="ChEBI" id="CHEBI:29105"/>
        <note>catalytic</note>
    </ligand>
</feature>
<feature type="binding site" evidence="2">
    <location>
        <position position="296"/>
    </location>
    <ligand>
        <name>Zn(2+)</name>
        <dbReference type="ChEBI" id="CHEBI:29105"/>
        <note>catalytic</note>
    </ligand>
</feature>
<feature type="binding site" evidence="2">
    <location>
        <begin position="297"/>
        <end position="300"/>
    </location>
    <ligand>
        <name>(2E,6E)-farnesyl diphosphate</name>
        <dbReference type="ChEBI" id="CHEBI:175763"/>
    </ligand>
</feature>
<feature type="binding site" evidence="2">
    <location>
        <position position="372"/>
    </location>
    <ligand>
        <name>Zn(2+)</name>
        <dbReference type="ChEBI" id="CHEBI:29105"/>
        <note>catalytic</note>
    </ligand>
</feature>
<feature type="site" description="Important for selectivity against geranylgeranyl diphosphate" evidence="2">
    <location>
        <position position="85"/>
    </location>
</feature>
<reference key="1">
    <citation type="journal article" date="2005" name="Nature">
        <title>The genome of the social amoeba Dictyostelium discoideum.</title>
        <authorList>
            <person name="Eichinger L."/>
            <person name="Pachebat J.A."/>
            <person name="Gloeckner G."/>
            <person name="Rajandream M.A."/>
            <person name="Sucgang R."/>
            <person name="Berriman M."/>
            <person name="Song J."/>
            <person name="Olsen R."/>
            <person name="Szafranski K."/>
            <person name="Xu Q."/>
            <person name="Tunggal B."/>
            <person name="Kummerfeld S."/>
            <person name="Madera M."/>
            <person name="Konfortov B.A."/>
            <person name="Rivero F."/>
            <person name="Bankier A.T."/>
            <person name="Lehmann R."/>
            <person name="Hamlin N."/>
            <person name="Davies R."/>
            <person name="Gaudet P."/>
            <person name="Fey P."/>
            <person name="Pilcher K."/>
            <person name="Chen G."/>
            <person name="Saunders D."/>
            <person name="Sodergren E.J."/>
            <person name="Davis P."/>
            <person name="Kerhornou A."/>
            <person name="Nie X."/>
            <person name="Hall N."/>
            <person name="Anjard C."/>
            <person name="Hemphill L."/>
            <person name="Bason N."/>
            <person name="Farbrother P."/>
            <person name="Desany B."/>
            <person name="Just E."/>
            <person name="Morio T."/>
            <person name="Rost R."/>
            <person name="Churcher C.M."/>
            <person name="Cooper J."/>
            <person name="Haydock S."/>
            <person name="van Driessche N."/>
            <person name="Cronin A."/>
            <person name="Goodhead I."/>
            <person name="Muzny D.M."/>
            <person name="Mourier T."/>
            <person name="Pain A."/>
            <person name="Lu M."/>
            <person name="Harper D."/>
            <person name="Lindsay R."/>
            <person name="Hauser H."/>
            <person name="James K.D."/>
            <person name="Quiles M."/>
            <person name="Madan Babu M."/>
            <person name="Saito T."/>
            <person name="Buchrieser C."/>
            <person name="Wardroper A."/>
            <person name="Felder M."/>
            <person name="Thangavelu M."/>
            <person name="Johnson D."/>
            <person name="Knights A."/>
            <person name="Loulseged H."/>
            <person name="Mungall K.L."/>
            <person name="Oliver K."/>
            <person name="Price C."/>
            <person name="Quail M.A."/>
            <person name="Urushihara H."/>
            <person name="Hernandez J."/>
            <person name="Rabbinowitsch E."/>
            <person name="Steffen D."/>
            <person name="Sanders M."/>
            <person name="Ma J."/>
            <person name="Kohara Y."/>
            <person name="Sharp S."/>
            <person name="Simmonds M.N."/>
            <person name="Spiegler S."/>
            <person name="Tivey A."/>
            <person name="Sugano S."/>
            <person name="White B."/>
            <person name="Walker D."/>
            <person name="Woodward J.R."/>
            <person name="Winckler T."/>
            <person name="Tanaka Y."/>
            <person name="Shaulsky G."/>
            <person name="Schleicher M."/>
            <person name="Weinstock G.M."/>
            <person name="Rosenthal A."/>
            <person name="Cox E.C."/>
            <person name="Chisholm R.L."/>
            <person name="Gibbs R.A."/>
            <person name="Loomis W.F."/>
            <person name="Platzer M."/>
            <person name="Kay R.R."/>
            <person name="Williams J.G."/>
            <person name="Dear P.H."/>
            <person name="Noegel A.A."/>
            <person name="Barrell B.G."/>
            <person name="Kuspa A."/>
        </authorList>
    </citation>
    <scope>NUCLEOTIDE SEQUENCE [LARGE SCALE GENOMIC DNA]</scope>
    <source>
        <strain>AX4</strain>
    </source>
</reference>
<dbReference type="EC" id="2.5.1.58"/>
<dbReference type="EMBL" id="AAFI02000005">
    <property type="protein sequence ID" value="EAL72824.1"/>
    <property type="molecule type" value="Genomic_DNA"/>
</dbReference>
<dbReference type="RefSeq" id="XP_646280.1">
    <property type="nucleotide sequence ID" value="XM_641188.1"/>
</dbReference>
<dbReference type="SMR" id="Q55D51"/>
<dbReference type="FunCoup" id="Q55D51">
    <property type="interactions" value="539"/>
</dbReference>
<dbReference type="STRING" id="44689.Q55D51"/>
<dbReference type="PaxDb" id="44689-DDB0237553"/>
<dbReference type="EnsemblProtists" id="EAL72824">
    <property type="protein sequence ID" value="EAL72824"/>
    <property type="gene ID" value="DDB_G0270948"/>
</dbReference>
<dbReference type="GeneID" id="8617235"/>
<dbReference type="KEGG" id="ddi:DDB_G0270948"/>
<dbReference type="dictyBase" id="DDB_G0270948">
    <property type="gene designation" value="fntB"/>
</dbReference>
<dbReference type="VEuPathDB" id="AmoebaDB:DDB_G0270948"/>
<dbReference type="eggNOG" id="KOG0365">
    <property type="taxonomic scope" value="Eukaryota"/>
</dbReference>
<dbReference type="HOGENOM" id="CLU_028946_0_1_1"/>
<dbReference type="InParanoid" id="Q55D51"/>
<dbReference type="OMA" id="WISFWIL"/>
<dbReference type="PhylomeDB" id="Q55D51"/>
<dbReference type="Reactome" id="R-DDI-9648002">
    <property type="pathway name" value="RAS processing"/>
</dbReference>
<dbReference type="PRO" id="PR:Q55D51"/>
<dbReference type="Proteomes" id="UP000002195">
    <property type="component" value="Chromosome 1"/>
</dbReference>
<dbReference type="GO" id="GO:0005965">
    <property type="term" value="C:protein farnesyltransferase complex"/>
    <property type="evidence" value="ECO:0000250"/>
    <property type="project" value="UniProtKB"/>
</dbReference>
<dbReference type="GO" id="GO:0004660">
    <property type="term" value="F:protein farnesyltransferase activity"/>
    <property type="evidence" value="ECO:0000250"/>
    <property type="project" value="UniProtKB"/>
</dbReference>
<dbReference type="GO" id="GO:0008270">
    <property type="term" value="F:zinc ion binding"/>
    <property type="evidence" value="ECO:0000250"/>
    <property type="project" value="UniProtKB"/>
</dbReference>
<dbReference type="GO" id="GO:0018343">
    <property type="term" value="P:protein farnesylation"/>
    <property type="evidence" value="ECO:0000250"/>
    <property type="project" value="UniProtKB"/>
</dbReference>
<dbReference type="CDD" id="cd02893">
    <property type="entry name" value="FTase"/>
    <property type="match status" value="1"/>
</dbReference>
<dbReference type="FunFam" id="1.50.10.20:FF:000069">
    <property type="entry name" value="Protein farnesyltransferase subunit beta"/>
    <property type="match status" value="1"/>
</dbReference>
<dbReference type="Gene3D" id="1.50.10.20">
    <property type="match status" value="1"/>
</dbReference>
<dbReference type="InterPro" id="IPR026872">
    <property type="entry name" value="FTB"/>
</dbReference>
<dbReference type="InterPro" id="IPR045089">
    <property type="entry name" value="PGGT1B-like"/>
</dbReference>
<dbReference type="InterPro" id="IPR001330">
    <property type="entry name" value="Prenyltrans"/>
</dbReference>
<dbReference type="InterPro" id="IPR008930">
    <property type="entry name" value="Terpenoid_cyclase/PrenylTrfase"/>
</dbReference>
<dbReference type="PANTHER" id="PTHR11774">
    <property type="entry name" value="GERANYLGERANYL TRANSFERASE TYPE BETA SUBUNIT"/>
    <property type="match status" value="1"/>
</dbReference>
<dbReference type="PANTHER" id="PTHR11774:SF6">
    <property type="entry name" value="PROTEIN FARNESYLTRANSFERASE SUBUNIT BETA"/>
    <property type="match status" value="1"/>
</dbReference>
<dbReference type="Pfam" id="PF00432">
    <property type="entry name" value="Prenyltrans"/>
    <property type="match status" value="1"/>
</dbReference>
<dbReference type="SUPFAM" id="SSF48239">
    <property type="entry name" value="Terpenoid cyclases/Protein prenyltransferases"/>
    <property type="match status" value="1"/>
</dbReference>
<evidence type="ECO:0000250" key="1"/>
<evidence type="ECO:0000250" key="2">
    <source>
        <dbReference type="UniProtKB" id="P49356"/>
    </source>
</evidence>
<evidence type="ECO:0000256" key="3">
    <source>
        <dbReference type="SAM" id="MobiDB-lite"/>
    </source>
</evidence>
<evidence type="ECO:0000305" key="4"/>
<accession>Q55D51</accession>
<protein>
    <recommendedName>
        <fullName>Protein farnesyltransferase subunit beta</fullName>
        <shortName>FTase-beta</shortName>
        <ecNumber>2.5.1.58</ecNumber>
    </recommendedName>
    <alternativeName>
        <fullName>CAAX farnesyltransferase subunit beta</fullName>
    </alternativeName>
    <alternativeName>
        <fullName>Ras proteins prenyltransferase subunit beta</fullName>
    </alternativeName>
</protein>
<name>FNTB_DICDI</name>
<gene>
    <name type="primary">fntB</name>
    <name type="ORF">DDB_G0270948</name>
</gene>
<proteinExistence type="inferred from homology"/>
<sequence>MSSIEEIDTDETFTSDYVSARKDEVDDIITATTIAQKKMENSILEKLNSTENGNIIEKKKILNFLMNGIEKIPMSHQGLDSSKVWISFWILNGMDMLDSLDSYPNISSRASKYLSILQNDDNNGNNNNRENNQNGGGFGGGNSHTSHVVSTFAAVSALYVIGTEESYKTIDREAMYKFLMRMKTKEGAFTSEDGGEYDSRTTYCAIAVASMLNILTAELERGVVDFLLSCQTYEGGFGAYPFNEAHGGYTFCSVAALSILNSLHKIDMNSLHRWITYRQSNDGGFEGRTNKLVDTCYSYWQGAVYIIIQSYFNYYKKQQQDDGDGKEGDQQEEGLLFNQAKLQEYVIRFCQQSDKKYSGFSDHPHRGKDYYHTCYGLSGISLSQYNEIGKAIQSLNTFTNTFEQPSPPINKKSTNVFTISNNNNNNNNKNNNSDDNNNNSNNNNNNSENQLVEPVHPIYNIKLSKCEKGFEIDLFLFQKEFKDASVSLGTLFFYAKFILK</sequence>